<dbReference type="EMBL" id="BC079168">
    <property type="protein sequence ID" value="AAH79168.1"/>
    <property type="molecule type" value="mRNA"/>
</dbReference>
<dbReference type="RefSeq" id="NP_001007747.1">
    <property type="nucleotide sequence ID" value="NM_001007746.1"/>
</dbReference>
<dbReference type="RefSeq" id="XP_017449175.1">
    <property type="nucleotide sequence ID" value="XM_017593686.1"/>
</dbReference>
<dbReference type="RefSeq" id="XP_017458448.1">
    <property type="nucleotide sequence ID" value="XM_017602959.1"/>
</dbReference>
<dbReference type="SMR" id="Q6AY71"/>
<dbReference type="FunCoup" id="Q6AY71">
    <property type="interactions" value="1697"/>
</dbReference>
<dbReference type="STRING" id="10116.ENSRNOP00000034206"/>
<dbReference type="PhosphoSitePlus" id="Q6AY71"/>
<dbReference type="PaxDb" id="10116-ENSRNOP00000034206"/>
<dbReference type="GeneID" id="362483"/>
<dbReference type="KEGG" id="rno:362483"/>
<dbReference type="UCSC" id="RGD:1549749">
    <property type="organism name" value="rat"/>
</dbReference>
<dbReference type="AGR" id="RGD:1549749"/>
<dbReference type="CTD" id="157657"/>
<dbReference type="RGD" id="1549749">
    <property type="gene designation" value="Cfap418"/>
</dbReference>
<dbReference type="VEuPathDB" id="HostDB:ENSRNOG00000026672"/>
<dbReference type="eggNOG" id="ENOG502S1KM">
    <property type="taxonomic scope" value="Eukaryota"/>
</dbReference>
<dbReference type="HOGENOM" id="CLU_092833_0_0_1"/>
<dbReference type="InParanoid" id="Q6AY71"/>
<dbReference type="PhylomeDB" id="Q6AY71"/>
<dbReference type="TreeFam" id="TF328851"/>
<dbReference type="PRO" id="PR:Q6AY71"/>
<dbReference type="Proteomes" id="UP000002494">
    <property type="component" value="Chromosome 5"/>
</dbReference>
<dbReference type="Bgee" id="ENSRNOG00000026672">
    <property type="expression patterns" value="Expressed in testis and 19 other cell types or tissues"/>
</dbReference>
<dbReference type="GO" id="GO:0097546">
    <property type="term" value="C:ciliary base"/>
    <property type="evidence" value="ECO:0000266"/>
    <property type="project" value="RGD"/>
</dbReference>
<dbReference type="GO" id="GO:0005737">
    <property type="term" value="C:cytoplasm"/>
    <property type="evidence" value="ECO:0000250"/>
    <property type="project" value="UniProtKB"/>
</dbReference>
<dbReference type="GO" id="GO:0005829">
    <property type="term" value="C:cytosol"/>
    <property type="evidence" value="ECO:0000318"/>
    <property type="project" value="GO_Central"/>
</dbReference>
<dbReference type="GO" id="GO:0001917">
    <property type="term" value="C:photoreceptor inner segment"/>
    <property type="evidence" value="ECO:0000250"/>
    <property type="project" value="UniProtKB"/>
</dbReference>
<dbReference type="GO" id="GO:0008594">
    <property type="term" value="P:photoreceptor cell morphogenesis"/>
    <property type="evidence" value="ECO:0000250"/>
    <property type="project" value="UniProtKB"/>
</dbReference>
<dbReference type="InterPro" id="IPR029239">
    <property type="entry name" value="CFAP418"/>
</dbReference>
<dbReference type="PANTHER" id="PTHR33958:SF1">
    <property type="entry name" value="CILIA- AND FLAGELLA-ASSOCIATED PROTEIN 418"/>
    <property type="match status" value="1"/>
</dbReference>
<dbReference type="PANTHER" id="PTHR33958">
    <property type="entry name" value="PROTEIN C8ORF37"/>
    <property type="match status" value="1"/>
</dbReference>
<dbReference type="Pfam" id="PF14996">
    <property type="entry name" value="RMP"/>
    <property type="match status" value="1"/>
</dbReference>
<proteinExistence type="evidence at transcript level"/>
<comment type="function">
    <text evidence="1">May be involved in photoreceptor outer segment disk morphogenesis (By similarity).</text>
</comment>
<comment type="subunit">
    <text evidence="2">Interacts (via N-terminus) with FAM161A (via central region); the interaction is direct.</text>
</comment>
<comment type="subcellular location">
    <subcellularLocation>
        <location evidence="1">Cytoplasm</location>
    </subcellularLocation>
    <subcellularLocation>
        <location evidence="1">Photoreceptor inner segment</location>
    </subcellularLocation>
    <text evidence="1">In the retina, located at the base of the primary cilium (By similarity). Expressed throughout photoreceptors cell body including the basal body, inner segment and synaptic terminus, but not in the outer segment (By similarity).</text>
</comment>
<sequence length="210" mass="23771">MAKDLDELLDEVETKFCRLDPLRLDLGERPKGGSGGGGTHSGDRNGAQEKDTLRSTETFKKEDDLDSLINEIFEEPNFDKKSFQKFKSKSSSNTSVRAPIQGLSKSCSPVYLSGSAIPCGIGTNTSQRACDRLRCVACDFQIVSYNDYMWDKSCDYLFFRNNMPEFHKLKTKLIEKKGARAYACQCSWRTVEELTDLQADHELRWVCGKH</sequence>
<protein>
    <recommendedName>
        <fullName>Cilia- and flagella-associated protein 418</fullName>
    </recommendedName>
</protein>
<reference key="1">
    <citation type="journal article" date="2004" name="Genome Res.">
        <title>The status, quality, and expansion of the NIH full-length cDNA project: the Mammalian Gene Collection (MGC).</title>
        <authorList>
            <consortium name="The MGC Project Team"/>
        </authorList>
    </citation>
    <scope>NUCLEOTIDE SEQUENCE [LARGE SCALE MRNA]</scope>
    <source>
        <tissue>Kidney</tissue>
    </source>
</reference>
<feature type="chain" id="PRO_0000271060" description="Cilia- and flagella-associated protein 418">
    <location>
        <begin position="1"/>
        <end position="210"/>
    </location>
</feature>
<feature type="region of interest" description="Required for interaction with FAM161A" evidence="2">
    <location>
        <begin position="1"/>
        <end position="77"/>
    </location>
</feature>
<feature type="region of interest" description="Disordered" evidence="3">
    <location>
        <begin position="24"/>
        <end position="59"/>
    </location>
</feature>
<feature type="compositionally biased region" description="Basic and acidic residues" evidence="3">
    <location>
        <begin position="41"/>
        <end position="59"/>
    </location>
</feature>
<keyword id="KW-0963">Cytoplasm</keyword>
<keyword id="KW-1185">Reference proteome</keyword>
<organism>
    <name type="scientific">Rattus norvegicus</name>
    <name type="common">Rat</name>
    <dbReference type="NCBI Taxonomy" id="10116"/>
    <lineage>
        <taxon>Eukaryota</taxon>
        <taxon>Metazoa</taxon>
        <taxon>Chordata</taxon>
        <taxon>Craniata</taxon>
        <taxon>Vertebrata</taxon>
        <taxon>Euteleostomi</taxon>
        <taxon>Mammalia</taxon>
        <taxon>Eutheria</taxon>
        <taxon>Euarchontoglires</taxon>
        <taxon>Glires</taxon>
        <taxon>Rodentia</taxon>
        <taxon>Myomorpha</taxon>
        <taxon>Muroidea</taxon>
        <taxon>Muridae</taxon>
        <taxon>Murinae</taxon>
        <taxon>Rattus</taxon>
    </lineage>
</organism>
<accession>Q6AY71</accession>
<name>CF418_RAT</name>
<evidence type="ECO:0000250" key="1">
    <source>
        <dbReference type="UniProtKB" id="Q3UJP5"/>
    </source>
</evidence>
<evidence type="ECO:0000250" key="2">
    <source>
        <dbReference type="UniProtKB" id="Q96NL8"/>
    </source>
</evidence>
<evidence type="ECO:0000256" key="3">
    <source>
        <dbReference type="SAM" id="MobiDB-lite"/>
    </source>
</evidence>
<evidence type="ECO:0000312" key="4">
    <source>
        <dbReference type="RGD" id="1549749"/>
    </source>
</evidence>
<gene>
    <name evidence="4" type="primary">Cfap418</name>
</gene>